<dbReference type="EC" id="5.6.1.7" evidence="1"/>
<dbReference type="EMBL" id="AM889285">
    <property type="protein sequence ID" value="CAP55992.1"/>
    <property type="molecule type" value="Genomic_DNA"/>
</dbReference>
<dbReference type="EMBL" id="CP001189">
    <property type="protein sequence ID" value="ACI50068.1"/>
    <property type="molecule type" value="Genomic_DNA"/>
</dbReference>
<dbReference type="RefSeq" id="WP_012225747.1">
    <property type="nucleotide sequence ID" value="NC_010125.1"/>
</dbReference>
<dbReference type="SMR" id="A9HK37"/>
<dbReference type="STRING" id="272568.GDI2049"/>
<dbReference type="KEGG" id="gdi:GDI2049"/>
<dbReference type="KEGG" id="gdj:Gdia_0271"/>
<dbReference type="eggNOG" id="COG0459">
    <property type="taxonomic scope" value="Bacteria"/>
</dbReference>
<dbReference type="HOGENOM" id="CLU_016503_3_0_5"/>
<dbReference type="OrthoDB" id="9766614at2"/>
<dbReference type="Proteomes" id="UP000001176">
    <property type="component" value="Chromosome"/>
</dbReference>
<dbReference type="GO" id="GO:0005737">
    <property type="term" value="C:cytoplasm"/>
    <property type="evidence" value="ECO:0007669"/>
    <property type="project" value="UniProtKB-SubCell"/>
</dbReference>
<dbReference type="GO" id="GO:0005524">
    <property type="term" value="F:ATP binding"/>
    <property type="evidence" value="ECO:0007669"/>
    <property type="project" value="UniProtKB-UniRule"/>
</dbReference>
<dbReference type="GO" id="GO:0140662">
    <property type="term" value="F:ATP-dependent protein folding chaperone"/>
    <property type="evidence" value="ECO:0007669"/>
    <property type="project" value="InterPro"/>
</dbReference>
<dbReference type="GO" id="GO:0016853">
    <property type="term" value="F:isomerase activity"/>
    <property type="evidence" value="ECO:0007669"/>
    <property type="project" value="UniProtKB-KW"/>
</dbReference>
<dbReference type="GO" id="GO:0051082">
    <property type="term" value="F:unfolded protein binding"/>
    <property type="evidence" value="ECO:0007669"/>
    <property type="project" value="UniProtKB-UniRule"/>
</dbReference>
<dbReference type="GO" id="GO:0042026">
    <property type="term" value="P:protein refolding"/>
    <property type="evidence" value="ECO:0007669"/>
    <property type="project" value="UniProtKB-UniRule"/>
</dbReference>
<dbReference type="CDD" id="cd03344">
    <property type="entry name" value="GroEL"/>
    <property type="match status" value="1"/>
</dbReference>
<dbReference type="FunFam" id="1.10.560.10:FF:000001">
    <property type="entry name" value="60 kDa chaperonin"/>
    <property type="match status" value="1"/>
</dbReference>
<dbReference type="FunFam" id="3.50.7.10:FF:000001">
    <property type="entry name" value="60 kDa chaperonin"/>
    <property type="match status" value="1"/>
</dbReference>
<dbReference type="Gene3D" id="3.50.7.10">
    <property type="entry name" value="GroEL"/>
    <property type="match status" value="1"/>
</dbReference>
<dbReference type="Gene3D" id="1.10.560.10">
    <property type="entry name" value="GroEL-like equatorial domain"/>
    <property type="match status" value="1"/>
</dbReference>
<dbReference type="Gene3D" id="3.30.260.10">
    <property type="entry name" value="TCP-1-like chaperonin intermediate domain"/>
    <property type="match status" value="1"/>
</dbReference>
<dbReference type="HAMAP" id="MF_00600">
    <property type="entry name" value="CH60"/>
    <property type="match status" value="1"/>
</dbReference>
<dbReference type="InterPro" id="IPR018370">
    <property type="entry name" value="Chaperonin_Cpn60_CS"/>
</dbReference>
<dbReference type="InterPro" id="IPR001844">
    <property type="entry name" value="Cpn60/GroEL"/>
</dbReference>
<dbReference type="InterPro" id="IPR002423">
    <property type="entry name" value="Cpn60/GroEL/TCP-1"/>
</dbReference>
<dbReference type="InterPro" id="IPR027409">
    <property type="entry name" value="GroEL-like_apical_dom_sf"/>
</dbReference>
<dbReference type="InterPro" id="IPR027413">
    <property type="entry name" value="GROEL-like_equatorial_sf"/>
</dbReference>
<dbReference type="InterPro" id="IPR027410">
    <property type="entry name" value="TCP-1-like_intermed_sf"/>
</dbReference>
<dbReference type="NCBIfam" id="TIGR02348">
    <property type="entry name" value="GroEL"/>
    <property type="match status" value="1"/>
</dbReference>
<dbReference type="NCBIfam" id="NF000592">
    <property type="entry name" value="PRK00013.1"/>
    <property type="match status" value="1"/>
</dbReference>
<dbReference type="NCBIfam" id="NF009487">
    <property type="entry name" value="PRK12849.1"/>
    <property type="match status" value="1"/>
</dbReference>
<dbReference type="NCBIfam" id="NF009488">
    <property type="entry name" value="PRK12850.1"/>
    <property type="match status" value="1"/>
</dbReference>
<dbReference type="NCBIfam" id="NF009489">
    <property type="entry name" value="PRK12851.1"/>
    <property type="match status" value="1"/>
</dbReference>
<dbReference type="PANTHER" id="PTHR45633">
    <property type="entry name" value="60 KDA HEAT SHOCK PROTEIN, MITOCHONDRIAL"/>
    <property type="match status" value="1"/>
</dbReference>
<dbReference type="Pfam" id="PF00118">
    <property type="entry name" value="Cpn60_TCP1"/>
    <property type="match status" value="1"/>
</dbReference>
<dbReference type="PRINTS" id="PR00298">
    <property type="entry name" value="CHAPERONIN60"/>
</dbReference>
<dbReference type="SUPFAM" id="SSF52029">
    <property type="entry name" value="GroEL apical domain-like"/>
    <property type="match status" value="1"/>
</dbReference>
<dbReference type="SUPFAM" id="SSF48592">
    <property type="entry name" value="GroEL equatorial domain-like"/>
    <property type="match status" value="1"/>
</dbReference>
<dbReference type="SUPFAM" id="SSF54849">
    <property type="entry name" value="GroEL-intermediate domain like"/>
    <property type="match status" value="1"/>
</dbReference>
<dbReference type="PROSITE" id="PS00296">
    <property type="entry name" value="CHAPERONINS_CPN60"/>
    <property type="match status" value="1"/>
</dbReference>
<gene>
    <name evidence="1" type="primary">groEL1</name>
    <name evidence="1" type="synonym">groL1</name>
    <name type="ordered locus">GDI2049</name>
    <name type="ordered locus">Gdia_0271</name>
</gene>
<comment type="function">
    <text evidence="1">Together with its co-chaperonin GroES, plays an essential role in assisting protein folding. The GroEL-GroES system forms a nano-cage that allows encapsulation of the non-native substrate proteins and provides a physical environment optimized to promote and accelerate protein folding.</text>
</comment>
<comment type="catalytic activity">
    <reaction evidence="1">
        <text>ATP + H2O + a folded polypeptide = ADP + phosphate + an unfolded polypeptide.</text>
        <dbReference type="EC" id="5.6.1.7"/>
    </reaction>
</comment>
<comment type="subunit">
    <text evidence="1">Forms a cylinder of 14 subunits composed of two heptameric rings stacked back-to-back. Interacts with the co-chaperonin GroES.</text>
</comment>
<comment type="subcellular location">
    <subcellularLocation>
        <location evidence="1">Cytoplasm</location>
    </subcellularLocation>
</comment>
<comment type="similarity">
    <text evidence="1">Belongs to the chaperonin (HSP60) family.</text>
</comment>
<accession>A9HK37</accession>
<accession>B5ZKV8</accession>
<protein>
    <recommendedName>
        <fullName evidence="1">Chaperonin GroEL 1</fullName>
        <ecNumber evidence="1">5.6.1.7</ecNumber>
    </recommendedName>
    <alternativeName>
        <fullName evidence="1">60 kDa chaperonin 1</fullName>
    </alternativeName>
    <alternativeName>
        <fullName evidence="1">Chaperonin-60 1</fullName>
        <shortName evidence="1">Cpn60 1</shortName>
    </alternativeName>
</protein>
<feature type="chain" id="PRO_0000332007" description="Chaperonin GroEL 1">
    <location>
        <begin position="1"/>
        <end position="547"/>
    </location>
</feature>
<feature type="binding site" evidence="1">
    <location>
        <begin position="30"/>
        <end position="33"/>
    </location>
    <ligand>
        <name>ATP</name>
        <dbReference type="ChEBI" id="CHEBI:30616"/>
    </ligand>
</feature>
<feature type="binding site" evidence="1">
    <location>
        <position position="51"/>
    </location>
    <ligand>
        <name>ATP</name>
        <dbReference type="ChEBI" id="CHEBI:30616"/>
    </ligand>
</feature>
<feature type="binding site" evidence="1">
    <location>
        <begin position="87"/>
        <end position="91"/>
    </location>
    <ligand>
        <name>ATP</name>
        <dbReference type="ChEBI" id="CHEBI:30616"/>
    </ligand>
</feature>
<feature type="binding site" evidence="1">
    <location>
        <position position="415"/>
    </location>
    <ligand>
        <name>ATP</name>
        <dbReference type="ChEBI" id="CHEBI:30616"/>
    </ligand>
</feature>
<feature type="binding site" evidence="1">
    <location>
        <position position="496"/>
    </location>
    <ligand>
        <name>ATP</name>
        <dbReference type="ChEBI" id="CHEBI:30616"/>
    </ligand>
</feature>
<keyword id="KW-0067">ATP-binding</keyword>
<keyword id="KW-0143">Chaperone</keyword>
<keyword id="KW-0963">Cytoplasm</keyword>
<keyword id="KW-0413">Isomerase</keyword>
<keyword id="KW-0547">Nucleotide-binding</keyword>
<keyword id="KW-1185">Reference proteome</keyword>
<organism>
    <name type="scientific">Gluconacetobacter diazotrophicus (strain ATCC 49037 / DSM 5601 / CCUG 37298 / CIP 103539 / LMG 7603 / PAl5)</name>
    <dbReference type="NCBI Taxonomy" id="272568"/>
    <lineage>
        <taxon>Bacteria</taxon>
        <taxon>Pseudomonadati</taxon>
        <taxon>Pseudomonadota</taxon>
        <taxon>Alphaproteobacteria</taxon>
        <taxon>Acetobacterales</taxon>
        <taxon>Acetobacteraceae</taxon>
        <taxon>Gluconacetobacter</taxon>
    </lineage>
</organism>
<proteinExistence type="inferred from homology"/>
<name>CH601_GLUDA</name>
<reference key="1">
    <citation type="journal article" date="2009" name="BMC Genomics">
        <title>Complete genome sequence of the sugarcane nitrogen-fixing endophyte Gluconacetobacter diazotrophicus Pal5.</title>
        <authorList>
            <person name="Bertalan M."/>
            <person name="Albano R."/>
            <person name="de Padua V."/>
            <person name="Rouws L."/>
            <person name="Rojas C."/>
            <person name="Hemerly A."/>
            <person name="Teixeira K."/>
            <person name="Schwab S."/>
            <person name="Araujo J."/>
            <person name="Oliveira A."/>
            <person name="Franca L."/>
            <person name="Magalhaes V."/>
            <person name="Alqueres S."/>
            <person name="Cardoso A."/>
            <person name="Almeida W."/>
            <person name="Loureiro M.M."/>
            <person name="Nogueira E."/>
            <person name="Cidade D."/>
            <person name="Oliveira D."/>
            <person name="Simao T."/>
            <person name="Macedo J."/>
            <person name="Valadao A."/>
            <person name="Dreschsel M."/>
            <person name="Freitas F."/>
            <person name="Vidal M."/>
            <person name="Guedes H."/>
            <person name="Rodrigues E."/>
            <person name="Meneses C."/>
            <person name="Brioso P."/>
            <person name="Pozzer L."/>
            <person name="Figueiredo D."/>
            <person name="Montano H."/>
            <person name="Junior J."/>
            <person name="de Souza Filho G."/>
            <person name="Martin Quintana Flores V."/>
            <person name="Ferreira B."/>
            <person name="Branco A."/>
            <person name="Gonzalez P."/>
            <person name="Guillobel H."/>
            <person name="Lemos M."/>
            <person name="Seibel L."/>
            <person name="Macedo J."/>
            <person name="Alves-Ferreira M."/>
            <person name="Sachetto-Martins G."/>
            <person name="Coelho A."/>
            <person name="Santos E."/>
            <person name="Amaral G."/>
            <person name="Neves A."/>
            <person name="Pacheco A.B."/>
            <person name="Carvalho D."/>
            <person name="Lery L."/>
            <person name="Bisch P."/>
            <person name="Rossle S.C."/>
            <person name="Urmenyi T."/>
            <person name="Rael Pereira A."/>
            <person name="Silva R."/>
            <person name="Rondinelli E."/>
            <person name="von Kruger W."/>
            <person name="Martins O."/>
            <person name="Baldani J.I."/>
            <person name="Ferreira P.C."/>
        </authorList>
    </citation>
    <scope>NUCLEOTIDE SEQUENCE [LARGE SCALE GENOMIC DNA]</scope>
    <source>
        <strain>ATCC 49037 / DSM 5601 / CCUG 37298 / CIP 103539 / LMG 7603 / PAl5</strain>
    </source>
</reference>
<reference key="2">
    <citation type="journal article" date="2010" name="Stand. Genomic Sci.">
        <title>Two genome sequences of the same bacterial strain, Gluconacetobacter diazotrophicus PAl 5, suggest a new standard in genome sequence submission.</title>
        <authorList>
            <person name="Giongo A."/>
            <person name="Tyler H.L."/>
            <person name="Zipperer U.N."/>
            <person name="Triplett E.W."/>
        </authorList>
    </citation>
    <scope>NUCLEOTIDE SEQUENCE [LARGE SCALE GENOMIC DNA]</scope>
    <source>
        <strain>ATCC 49037 / DSM 5601 / CCUG 37298 / CIP 103539 / LMG 7603 / PAl5</strain>
    </source>
</reference>
<evidence type="ECO:0000255" key="1">
    <source>
        <dbReference type="HAMAP-Rule" id="MF_00600"/>
    </source>
</evidence>
<sequence>MAAKDVKFGGDARQRMLRGVDILADAVKVTLGPKGRNVVLDKSFGAPRITKDGVSVAKEIELADKFENMGAQMVREVASKTNDVAGDGTTTATVLAQAIVREGAKAVAAGMNPMDLKRGIDKAVIAVVEELKKNTKKITTPAETAQVGTISANGEHEIGEMISQAMQKVGSEGVITVEEAKGLHTELDVVEGMQFDRGYISPYFITNAEKMVADLDNPYILIHEKKLSSLQPMLPLLESVVQSGRPLLIIAEDVDGEALATLVVNKLRGGLKIAAVKAPGFGDRRKAMLEDIAILTGGQVISEDLGIKLETVTLAMLGRAKKVRIEKENTTIVEGAGASDDIKGRCGQIRAQIEETTSDYDREKLQERLAKLAGGVAVIRVGGSTEVEVKERKDRVDDALHATRAAVEEGIVPGGGTALARASTALGNLHFHNDDQRVGAEIIRKALQAPLRQIAHNAGEDGAVIAGKVLESNDYNYGFDAQIGDYKDLVAAGIIDPTKVVRTALQDASSVAGLLITTEAMVAEKPEKKAPAMPAGGGMGGMGDMDF</sequence>